<keyword id="KW-0067">ATP-binding</keyword>
<keyword id="KW-0460">Magnesium</keyword>
<keyword id="KW-0547">Nucleotide-binding</keyword>
<keyword id="KW-1185">Reference proteome</keyword>
<keyword id="KW-0808">Transferase</keyword>
<keyword id="KW-0819">tRNA processing</keyword>
<name>MIAA_BORBU</name>
<sequence length="306" mass="35631">MKEDRVVFIFGPTAVGKSNILFHFPKNKAEIINVDSIQVYKEFNIASSKPSKNLMKHIKHHLVDFLDPEKDYTIGIFYEQALKIVKEIRQKKKIPIFVGGTAFYFKHLKDGFPSTPLVTSKIRIYVNNLLELKGKSYLLKELKNVDPIRFNMLNKNDIYRIKRSLEVYYQTGIPISQFQKKQSSEFKNIVIIGLKRSFEDLKTRISIRINEMLNSGLLSEIKGLFSKGYNENTPAFKGIGYNEFLLWKSRPCYGLNDIIGLINKNSFLYAKRQMTFFAKISDVLWLHPEDDLDNILNLIFKVDKEI</sequence>
<dbReference type="EC" id="2.5.1.75" evidence="1"/>
<dbReference type="EMBL" id="AE000783">
    <property type="protein sequence ID" value="AAC67163.1"/>
    <property type="molecule type" value="Genomic_DNA"/>
</dbReference>
<dbReference type="PIR" id="D70202">
    <property type="entry name" value="D70202"/>
</dbReference>
<dbReference type="RefSeq" id="NP_212955.1">
    <property type="nucleotide sequence ID" value="NC_001318.1"/>
</dbReference>
<dbReference type="RefSeq" id="WP_010889830.1">
    <property type="nucleotide sequence ID" value="NC_001318.1"/>
</dbReference>
<dbReference type="SMR" id="O51761"/>
<dbReference type="STRING" id="224326.BB_0821"/>
<dbReference type="PaxDb" id="224326-BB_0821"/>
<dbReference type="EnsemblBacteria" id="AAC67163">
    <property type="protein sequence ID" value="AAC67163"/>
    <property type="gene ID" value="BB_0821"/>
</dbReference>
<dbReference type="KEGG" id="bbu:BB_0821"/>
<dbReference type="PATRIC" id="fig|224326.49.peg.1213"/>
<dbReference type="HOGENOM" id="CLU_032616_0_2_12"/>
<dbReference type="OrthoDB" id="9776390at2"/>
<dbReference type="Proteomes" id="UP000001807">
    <property type="component" value="Chromosome"/>
</dbReference>
<dbReference type="GO" id="GO:0005524">
    <property type="term" value="F:ATP binding"/>
    <property type="evidence" value="ECO:0007669"/>
    <property type="project" value="UniProtKB-UniRule"/>
</dbReference>
<dbReference type="GO" id="GO:0052381">
    <property type="term" value="F:tRNA dimethylallyltransferase activity"/>
    <property type="evidence" value="ECO:0007669"/>
    <property type="project" value="UniProtKB-UniRule"/>
</dbReference>
<dbReference type="GO" id="GO:0006400">
    <property type="term" value="P:tRNA modification"/>
    <property type="evidence" value="ECO:0007669"/>
    <property type="project" value="TreeGrafter"/>
</dbReference>
<dbReference type="Gene3D" id="1.10.20.140">
    <property type="match status" value="1"/>
</dbReference>
<dbReference type="Gene3D" id="3.40.50.300">
    <property type="entry name" value="P-loop containing nucleotide triphosphate hydrolases"/>
    <property type="match status" value="1"/>
</dbReference>
<dbReference type="HAMAP" id="MF_00185">
    <property type="entry name" value="IPP_trans"/>
    <property type="match status" value="1"/>
</dbReference>
<dbReference type="InterPro" id="IPR039657">
    <property type="entry name" value="Dimethylallyltransferase"/>
</dbReference>
<dbReference type="InterPro" id="IPR018022">
    <property type="entry name" value="IPT"/>
</dbReference>
<dbReference type="InterPro" id="IPR027417">
    <property type="entry name" value="P-loop_NTPase"/>
</dbReference>
<dbReference type="NCBIfam" id="TIGR00174">
    <property type="entry name" value="miaA"/>
    <property type="match status" value="1"/>
</dbReference>
<dbReference type="PANTHER" id="PTHR11088">
    <property type="entry name" value="TRNA DIMETHYLALLYLTRANSFERASE"/>
    <property type="match status" value="1"/>
</dbReference>
<dbReference type="PANTHER" id="PTHR11088:SF60">
    <property type="entry name" value="TRNA DIMETHYLALLYLTRANSFERASE"/>
    <property type="match status" value="1"/>
</dbReference>
<dbReference type="Pfam" id="PF01715">
    <property type="entry name" value="IPPT"/>
    <property type="match status" value="1"/>
</dbReference>
<dbReference type="SUPFAM" id="SSF52540">
    <property type="entry name" value="P-loop containing nucleoside triphosphate hydrolases"/>
    <property type="match status" value="1"/>
</dbReference>
<proteinExistence type="inferred from homology"/>
<evidence type="ECO:0000255" key="1">
    <source>
        <dbReference type="HAMAP-Rule" id="MF_00185"/>
    </source>
</evidence>
<feature type="chain" id="PRO_0000163883" description="tRNA dimethylallyltransferase">
    <location>
        <begin position="1"/>
        <end position="306"/>
    </location>
</feature>
<feature type="region of interest" description="Interaction with substrate tRNA" evidence="1">
    <location>
        <begin position="35"/>
        <end position="38"/>
    </location>
</feature>
<feature type="binding site" evidence="1">
    <location>
        <begin position="11"/>
        <end position="18"/>
    </location>
    <ligand>
        <name>ATP</name>
        <dbReference type="ChEBI" id="CHEBI:30616"/>
    </ligand>
</feature>
<feature type="binding site" evidence="1">
    <location>
        <begin position="13"/>
        <end position="18"/>
    </location>
    <ligand>
        <name>substrate</name>
    </ligand>
</feature>
<feature type="site" description="Interaction with substrate tRNA" evidence="1">
    <location>
        <position position="101"/>
    </location>
</feature>
<feature type="site" description="Interaction with substrate tRNA" evidence="1">
    <location>
        <position position="123"/>
    </location>
</feature>
<gene>
    <name evidence="1" type="primary">miaA</name>
    <name type="ordered locus">BB_0821</name>
</gene>
<accession>O51761</accession>
<organism>
    <name type="scientific">Borreliella burgdorferi (strain ATCC 35210 / DSM 4680 / CIP 102532 / B31)</name>
    <name type="common">Borrelia burgdorferi</name>
    <dbReference type="NCBI Taxonomy" id="224326"/>
    <lineage>
        <taxon>Bacteria</taxon>
        <taxon>Pseudomonadati</taxon>
        <taxon>Spirochaetota</taxon>
        <taxon>Spirochaetia</taxon>
        <taxon>Spirochaetales</taxon>
        <taxon>Borreliaceae</taxon>
        <taxon>Borreliella</taxon>
    </lineage>
</organism>
<protein>
    <recommendedName>
        <fullName evidence="1">tRNA dimethylallyltransferase</fullName>
        <ecNumber evidence="1">2.5.1.75</ecNumber>
    </recommendedName>
    <alternativeName>
        <fullName evidence="1">Dimethylallyl diphosphate:tRNA dimethylallyltransferase</fullName>
        <shortName evidence="1">DMAPP:tRNA dimethylallyltransferase</shortName>
        <shortName evidence="1">DMATase</shortName>
    </alternativeName>
    <alternativeName>
        <fullName evidence="1">Isopentenyl-diphosphate:tRNA isopentenyltransferase</fullName>
        <shortName evidence="1">IPP transferase</shortName>
        <shortName evidence="1">IPPT</shortName>
        <shortName evidence="1">IPTase</shortName>
    </alternativeName>
</protein>
<comment type="function">
    <text evidence="1">Catalyzes the transfer of a dimethylallyl group onto the adenine at position 37 in tRNAs that read codons beginning with uridine, leading to the formation of N6-(dimethylallyl)adenosine (i(6)A).</text>
</comment>
<comment type="catalytic activity">
    <reaction evidence="1">
        <text>adenosine(37) in tRNA + dimethylallyl diphosphate = N(6)-dimethylallyladenosine(37) in tRNA + diphosphate</text>
        <dbReference type="Rhea" id="RHEA:26482"/>
        <dbReference type="Rhea" id="RHEA-COMP:10162"/>
        <dbReference type="Rhea" id="RHEA-COMP:10375"/>
        <dbReference type="ChEBI" id="CHEBI:33019"/>
        <dbReference type="ChEBI" id="CHEBI:57623"/>
        <dbReference type="ChEBI" id="CHEBI:74411"/>
        <dbReference type="ChEBI" id="CHEBI:74415"/>
        <dbReference type="EC" id="2.5.1.75"/>
    </reaction>
</comment>
<comment type="cofactor">
    <cofactor evidence="1">
        <name>Mg(2+)</name>
        <dbReference type="ChEBI" id="CHEBI:18420"/>
    </cofactor>
</comment>
<comment type="subunit">
    <text evidence="1">Monomer.</text>
</comment>
<comment type="similarity">
    <text evidence="1">Belongs to the IPP transferase family.</text>
</comment>
<reference key="1">
    <citation type="journal article" date="1997" name="Nature">
        <title>Genomic sequence of a Lyme disease spirochaete, Borrelia burgdorferi.</title>
        <authorList>
            <person name="Fraser C.M."/>
            <person name="Casjens S."/>
            <person name="Huang W.M."/>
            <person name="Sutton G.G."/>
            <person name="Clayton R.A."/>
            <person name="Lathigra R."/>
            <person name="White O."/>
            <person name="Ketchum K.A."/>
            <person name="Dodson R.J."/>
            <person name="Hickey E.K."/>
            <person name="Gwinn M.L."/>
            <person name="Dougherty B.A."/>
            <person name="Tomb J.-F."/>
            <person name="Fleischmann R.D."/>
            <person name="Richardson D.L."/>
            <person name="Peterson J.D."/>
            <person name="Kerlavage A.R."/>
            <person name="Quackenbush J."/>
            <person name="Salzberg S.L."/>
            <person name="Hanson M."/>
            <person name="van Vugt R."/>
            <person name="Palmer N."/>
            <person name="Adams M.D."/>
            <person name="Gocayne J.D."/>
            <person name="Weidman J.F."/>
            <person name="Utterback T.R."/>
            <person name="Watthey L."/>
            <person name="McDonald L.A."/>
            <person name="Artiach P."/>
            <person name="Bowman C."/>
            <person name="Garland S.A."/>
            <person name="Fujii C."/>
            <person name="Cotton M.D."/>
            <person name="Horst K."/>
            <person name="Roberts K.M."/>
            <person name="Hatch B."/>
            <person name="Smith H.O."/>
            <person name="Venter J.C."/>
        </authorList>
    </citation>
    <scope>NUCLEOTIDE SEQUENCE [LARGE SCALE GENOMIC DNA]</scope>
    <source>
        <strain>ATCC 35210 / DSM 4680 / CIP 102532 / B31</strain>
    </source>
</reference>